<comment type="similarity">
    <text evidence="1">Belongs to the UPF0473 family.</text>
</comment>
<proteinExistence type="inferred from homology"/>
<sequence>MSHDHNHDHEERELITLVDEQGNETLFEILLTIDGKEEFGKNYVLLVPVNAEEDEDGQVEIQAYSFIENEDGTEGELQPIPEDSEDEWNMIEEVFNSFMEE</sequence>
<feature type="chain" id="PRO_1000185003" description="UPF0473 protein SPT_0244">
    <location>
        <begin position="1"/>
        <end position="101"/>
    </location>
</feature>
<name>Y244_STRZT</name>
<evidence type="ECO:0000255" key="1">
    <source>
        <dbReference type="HAMAP-Rule" id="MF_01448"/>
    </source>
</evidence>
<reference key="1">
    <citation type="journal article" date="2010" name="Genome Biol.">
        <title>Structure and dynamics of the pan-genome of Streptococcus pneumoniae and closely related species.</title>
        <authorList>
            <person name="Donati C."/>
            <person name="Hiller N.L."/>
            <person name="Tettelin H."/>
            <person name="Muzzi A."/>
            <person name="Croucher N.J."/>
            <person name="Angiuoli S.V."/>
            <person name="Oggioni M."/>
            <person name="Dunning Hotopp J.C."/>
            <person name="Hu F.Z."/>
            <person name="Riley D.R."/>
            <person name="Covacci A."/>
            <person name="Mitchell T.J."/>
            <person name="Bentley S.D."/>
            <person name="Kilian M."/>
            <person name="Ehrlich G.D."/>
            <person name="Rappuoli R."/>
            <person name="Moxon E.R."/>
            <person name="Masignani V."/>
        </authorList>
    </citation>
    <scope>NUCLEOTIDE SEQUENCE [LARGE SCALE GENOMIC DNA]</scope>
    <source>
        <strain>Taiwan19F-14</strain>
    </source>
</reference>
<accession>C1CP76</accession>
<gene>
    <name type="ordered locus">SPT_0244</name>
</gene>
<organism>
    <name type="scientific">Streptococcus pneumoniae (strain Taiwan19F-14)</name>
    <dbReference type="NCBI Taxonomy" id="487213"/>
    <lineage>
        <taxon>Bacteria</taxon>
        <taxon>Bacillati</taxon>
        <taxon>Bacillota</taxon>
        <taxon>Bacilli</taxon>
        <taxon>Lactobacillales</taxon>
        <taxon>Streptococcaceae</taxon>
        <taxon>Streptococcus</taxon>
    </lineage>
</organism>
<dbReference type="EMBL" id="CP000921">
    <property type="protein sequence ID" value="ACO23996.1"/>
    <property type="molecule type" value="Genomic_DNA"/>
</dbReference>
<dbReference type="RefSeq" id="WP_000017620.1">
    <property type="nucleotide sequence ID" value="NC_012469.1"/>
</dbReference>
<dbReference type="KEGG" id="snt:SPT_0244"/>
<dbReference type="HOGENOM" id="CLU_146610_2_1_9"/>
<dbReference type="HAMAP" id="MF_01448">
    <property type="entry name" value="UPF0473"/>
    <property type="match status" value="1"/>
</dbReference>
<dbReference type="InterPro" id="IPR009711">
    <property type="entry name" value="UPF0473"/>
</dbReference>
<dbReference type="NCBIfam" id="NF010215">
    <property type="entry name" value="PRK13678.1-2"/>
    <property type="match status" value="1"/>
</dbReference>
<dbReference type="NCBIfam" id="NF010217">
    <property type="entry name" value="PRK13678.1-4"/>
    <property type="match status" value="1"/>
</dbReference>
<dbReference type="PANTHER" id="PTHR40066">
    <property type="entry name" value="UPF0473 PROTEIN CBO2561/CLC_2432"/>
    <property type="match status" value="1"/>
</dbReference>
<dbReference type="PANTHER" id="PTHR40066:SF1">
    <property type="entry name" value="UPF0473 PROTEIN CBO2561_CLC_2432"/>
    <property type="match status" value="1"/>
</dbReference>
<dbReference type="Pfam" id="PF06949">
    <property type="entry name" value="DUF1292"/>
    <property type="match status" value="1"/>
</dbReference>
<protein>
    <recommendedName>
        <fullName evidence="1">UPF0473 protein SPT_0244</fullName>
    </recommendedName>
</protein>